<organism>
    <name type="scientific">Neurospora crassa (strain ATCC 24698 / 74-OR23-1A / CBS 708.71 / DSM 1257 / FGSC 987)</name>
    <dbReference type="NCBI Taxonomy" id="367110"/>
    <lineage>
        <taxon>Eukaryota</taxon>
        <taxon>Fungi</taxon>
        <taxon>Dikarya</taxon>
        <taxon>Ascomycota</taxon>
        <taxon>Pezizomycotina</taxon>
        <taxon>Sordariomycetes</taxon>
        <taxon>Sordariomycetidae</taxon>
        <taxon>Sordariales</taxon>
        <taxon>Sordariaceae</taxon>
        <taxon>Neurospora</taxon>
    </lineage>
</organism>
<name>RM40_NEUCR</name>
<reference key="1">
    <citation type="journal article" date="2003" name="Nature">
        <title>The genome sequence of the filamentous fungus Neurospora crassa.</title>
        <authorList>
            <person name="Galagan J.E."/>
            <person name="Calvo S.E."/>
            <person name="Borkovich K.A."/>
            <person name="Selker E.U."/>
            <person name="Read N.D."/>
            <person name="Jaffe D.B."/>
            <person name="FitzHugh W."/>
            <person name="Ma L.-J."/>
            <person name="Smirnov S."/>
            <person name="Purcell S."/>
            <person name="Rehman B."/>
            <person name="Elkins T."/>
            <person name="Engels R."/>
            <person name="Wang S."/>
            <person name="Nielsen C.B."/>
            <person name="Butler J."/>
            <person name="Endrizzi M."/>
            <person name="Qui D."/>
            <person name="Ianakiev P."/>
            <person name="Bell-Pedersen D."/>
            <person name="Nelson M.A."/>
            <person name="Werner-Washburne M."/>
            <person name="Selitrennikoff C.P."/>
            <person name="Kinsey J.A."/>
            <person name="Braun E.L."/>
            <person name="Zelter A."/>
            <person name="Schulte U."/>
            <person name="Kothe G.O."/>
            <person name="Jedd G."/>
            <person name="Mewes H.-W."/>
            <person name="Staben C."/>
            <person name="Marcotte E."/>
            <person name="Greenberg D."/>
            <person name="Roy A."/>
            <person name="Foley K."/>
            <person name="Naylor J."/>
            <person name="Stange-Thomann N."/>
            <person name="Barrett R."/>
            <person name="Gnerre S."/>
            <person name="Kamal M."/>
            <person name="Kamvysselis M."/>
            <person name="Mauceli E.W."/>
            <person name="Bielke C."/>
            <person name="Rudd S."/>
            <person name="Frishman D."/>
            <person name="Krystofova S."/>
            <person name="Rasmussen C."/>
            <person name="Metzenberg R.L."/>
            <person name="Perkins D.D."/>
            <person name="Kroken S."/>
            <person name="Cogoni C."/>
            <person name="Macino G."/>
            <person name="Catcheside D.E.A."/>
            <person name="Li W."/>
            <person name="Pratt R.J."/>
            <person name="Osmani S.A."/>
            <person name="DeSouza C.P.C."/>
            <person name="Glass N.L."/>
            <person name="Orbach M.J."/>
            <person name="Berglund J.A."/>
            <person name="Voelker R."/>
            <person name="Yarden O."/>
            <person name="Plamann M."/>
            <person name="Seiler S."/>
            <person name="Dunlap J.C."/>
            <person name="Radford A."/>
            <person name="Aramayo R."/>
            <person name="Natvig D.O."/>
            <person name="Alex L.A."/>
            <person name="Mannhaupt G."/>
            <person name="Ebbole D.J."/>
            <person name="Freitag M."/>
            <person name="Paulsen I."/>
            <person name="Sachs M.S."/>
            <person name="Lander E.S."/>
            <person name="Nusbaum C."/>
            <person name="Birren B.W."/>
        </authorList>
    </citation>
    <scope>NUCLEOTIDE SEQUENCE [LARGE SCALE GENOMIC DNA]</scope>
    <source>
        <strain>ATCC 24698 / 74-OR23-1A / CBS 708.71 / DSM 1257 / FGSC 987</strain>
    </source>
</reference>
<reference key="2">
    <citation type="journal article" date="2006" name="FEMS Microbiol. Lett.">
        <title>Identification and comparative analysis of the large subunit mitochondrial ribosomal proteins of Neurospora crassa.</title>
        <authorList>
            <person name="Gan X."/>
            <person name="Arita K."/>
            <person name="Isono S."/>
            <person name="Kitakawa M."/>
            <person name="Yoshino K."/>
            <person name="Yonezawa K."/>
            <person name="Kato A."/>
            <person name="Inoue H."/>
            <person name="Isono K."/>
        </authorList>
    </citation>
    <scope>IDENTIFICATION IN THE MITOCHONDRIAL RIBOSOMAL LARGE COMPLEX</scope>
    <scope>IDENTIFICATION BY MASS SPECTROMETRY</scope>
</reference>
<reference evidence="7 8" key="3">
    <citation type="journal article" date="2020" name="Nat. Commun.">
        <title>Analysis of translating mitoribosome reveals functional characteristics of translation in mitochondria of fungi.</title>
        <authorList>
            <person name="Itoh Y."/>
            <person name="Naschberger A."/>
            <person name="Mortezaei N."/>
            <person name="Herrmann J.M."/>
            <person name="Amunts A."/>
        </authorList>
    </citation>
    <scope>STRUCTURE BY ELECTRON MICROSCOPY (2.74 ANGSTROMS)</scope>
</reference>
<accession>Q7RXU7</accession>
<feature type="chain" id="PRO_0000458587" description="Large ribosomal subunit protein uL24m">
    <location>
        <begin position="1"/>
        <end position="396"/>
    </location>
</feature>
<feature type="region of interest" description="Disordered" evidence="1">
    <location>
        <begin position="374"/>
        <end position="396"/>
    </location>
</feature>
<feature type="compositionally biased region" description="Polar residues" evidence="1">
    <location>
        <begin position="384"/>
        <end position="396"/>
    </location>
</feature>
<evidence type="ECO:0000256" key="1">
    <source>
        <dbReference type="SAM" id="MobiDB-lite"/>
    </source>
</evidence>
<evidence type="ECO:0000269" key="2">
    <source>
    </source>
</evidence>
<evidence type="ECO:0000269" key="3">
    <source>
    </source>
</evidence>
<evidence type="ECO:0000303" key="4">
    <source>
    </source>
</evidence>
<evidence type="ECO:0000305" key="5"/>
<evidence type="ECO:0000305" key="6">
    <source>
    </source>
</evidence>
<evidence type="ECO:0007744" key="7">
    <source>
        <dbReference type="PDB" id="6YWS"/>
    </source>
</evidence>
<evidence type="ECO:0007744" key="8">
    <source>
        <dbReference type="PDB" id="6YWV"/>
    </source>
</evidence>
<proteinExistence type="evidence at protein level"/>
<keyword id="KW-0002">3D-structure</keyword>
<keyword id="KW-0496">Mitochondrion</keyword>
<keyword id="KW-1185">Reference proteome</keyword>
<sequence length="396" mass="45381">MDKLLRRVRMAEGMVARRAQRKNALLKRITERKQNKKNGEAFTEAIQQRKAAVEARNEDWMLGPLAPRRELDEITLSNGNFFGSLSPTRALLESEVSEEERKARVAWCGSPKFLCIAPGDRVVVIEGHHKDLIGTIEKLNTRNMTVEIQSEKLKTNTTVPQFMQNDADKPVTQIYARLPISSVRLVHPLKDPQTGEYRDVIIRELRPRNIVHDRPTRTRSMRRFVPGENIIIPWPKQEPIKREDQPADTLRIDVDEKTFVPTLFRPPAPQQVLDELRNKYSIFRTRHTPEYIAKKEQEEQEKEAKKSAAKAMLTPVQEYNRKQRELRRARGQPALTEEMLAKIGEVVARNKLGHHQAPKVKEETVAQIEKAVEQLSLGGGQEDAATTTSPEQPKVV</sequence>
<gene>
    <name type="primary">mrpl40</name>
    <name type="ORF">NCU01485</name>
</gene>
<dbReference type="EMBL" id="CM002237">
    <property type="protein sequence ID" value="EAA27526.2"/>
    <property type="molecule type" value="Genomic_DNA"/>
</dbReference>
<dbReference type="RefSeq" id="XP_956762.2">
    <property type="nucleotide sequence ID" value="XM_951669.2"/>
</dbReference>
<dbReference type="PDB" id="6YWS">
    <property type="method" value="EM"/>
    <property type="resolution" value="2.74 A"/>
    <property type="chains" value="Q=1-396"/>
</dbReference>
<dbReference type="PDB" id="6YWV">
    <property type="method" value="EM"/>
    <property type="resolution" value="3.03 A"/>
    <property type="chains" value="Q=1-396"/>
</dbReference>
<dbReference type="PDB" id="6YWX">
    <property type="method" value="EM"/>
    <property type="resolution" value="3.10 A"/>
    <property type="chains" value="Q=1-396"/>
</dbReference>
<dbReference type="PDBsum" id="6YWS"/>
<dbReference type="PDBsum" id="6YWV"/>
<dbReference type="PDBsum" id="6YWX"/>
<dbReference type="EMDB" id="EMD-10973"/>
<dbReference type="EMDB" id="EMD-10977"/>
<dbReference type="EMDB" id="EMD-10978"/>
<dbReference type="SMR" id="Q7RXU7"/>
<dbReference type="FunCoup" id="Q7RXU7">
    <property type="interactions" value="140"/>
</dbReference>
<dbReference type="STRING" id="367110.Q7RXU7"/>
<dbReference type="PaxDb" id="5141-EFNCRP00000009711"/>
<dbReference type="EnsemblFungi" id="EAA27526">
    <property type="protein sequence ID" value="EAA27526"/>
    <property type="gene ID" value="NCU01485"/>
</dbReference>
<dbReference type="GeneID" id="3872910"/>
<dbReference type="KEGG" id="ncr:NCU01485"/>
<dbReference type="VEuPathDB" id="FungiDB:NCU01485"/>
<dbReference type="HOGENOM" id="CLU_041333_0_0_1"/>
<dbReference type="InParanoid" id="Q7RXU7"/>
<dbReference type="OrthoDB" id="359154at2759"/>
<dbReference type="Proteomes" id="UP000001805">
    <property type="component" value="Chromosome 6, Linkage Group II"/>
</dbReference>
<dbReference type="GO" id="GO:0005739">
    <property type="term" value="C:mitochondrion"/>
    <property type="evidence" value="ECO:0000318"/>
    <property type="project" value="GO_Central"/>
</dbReference>
<dbReference type="GO" id="GO:0005840">
    <property type="term" value="C:ribosome"/>
    <property type="evidence" value="ECO:0007669"/>
    <property type="project" value="InterPro"/>
</dbReference>
<dbReference type="GO" id="GO:0003735">
    <property type="term" value="F:structural constituent of ribosome"/>
    <property type="evidence" value="ECO:0007669"/>
    <property type="project" value="InterPro"/>
</dbReference>
<dbReference type="GO" id="GO:0006412">
    <property type="term" value="P:translation"/>
    <property type="evidence" value="ECO:0000318"/>
    <property type="project" value="GO_Central"/>
</dbReference>
<dbReference type="Gene3D" id="2.30.30.30">
    <property type="match status" value="1"/>
</dbReference>
<dbReference type="InterPro" id="IPR005824">
    <property type="entry name" value="KOW"/>
</dbReference>
<dbReference type="InterPro" id="IPR014722">
    <property type="entry name" value="Rib_uL2_dom2"/>
</dbReference>
<dbReference type="InterPro" id="IPR003256">
    <property type="entry name" value="Ribosomal_uL24"/>
</dbReference>
<dbReference type="InterPro" id="IPR008991">
    <property type="entry name" value="Translation_prot_SH3-like_sf"/>
</dbReference>
<dbReference type="PANTHER" id="PTHR12903">
    <property type="entry name" value="MITOCHONDRIAL RIBOSOMAL PROTEIN L24"/>
    <property type="match status" value="1"/>
</dbReference>
<dbReference type="Pfam" id="PF22682">
    <property type="entry name" value="Ribosomal_uL24m-like"/>
    <property type="match status" value="1"/>
</dbReference>
<dbReference type="SMART" id="SM00739">
    <property type="entry name" value="KOW"/>
    <property type="match status" value="1"/>
</dbReference>
<dbReference type="SUPFAM" id="SSF50104">
    <property type="entry name" value="Translation proteins SH3-like domain"/>
    <property type="match status" value="1"/>
</dbReference>
<comment type="function">
    <text evidence="6">Component of the mitochondrial ribosome (mitoribosome), a dedicated translation machinery responsible for the synthesis of mitochondrial genome-encoded proteins, including at least some of the essential transmembrane subunits of the mitochondrial respiratory chain. The mitoribosomes are attached to the mitochondrial inner membrane and translation products are cotranslationally integrated into the membrane.</text>
</comment>
<comment type="subunit">
    <text evidence="2 3">Component of the mitochondrial large ribosomal subunit (mt-LSU). Mature N.crassa 74S mitochondrial ribosomes consist of a small (37S) and a large (54S) subunit. The 37S small subunit contains a 16S ribosomal RNA (16S mt-rRNA) and 32 different proteins. The 54S large subunit contains a 23S rRNA (23S mt-rRNA) and 42 different proteins. uL24m forms the wall of the exit tunnel.</text>
</comment>
<comment type="subcellular location">
    <subcellularLocation>
        <location evidence="2 3">Mitochondrion</location>
    </subcellularLocation>
</comment>
<comment type="similarity">
    <text evidence="5">Belongs to the universal ribosomal protein uL24 family.</text>
</comment>
<protein>
    <recommendedName>
        <fullName evidence="4">Large ribosomal subunit protein uL24m</fullName>
    </recommendedName>
</protein>